<gene>
    <name type="primary">BTT1</name>
    <name type="ordered locus">YDR252W</name>
    <name type="ORF">YD9320A.02</name>
</gene>
<accession>P40314</accession>
<accession>D6VSN2</accession>
<feature type="chain" id="PRO_0000213551" description="Nascent polypeptide-associated complex subunit beta-2">
    <location>
        <begin position="1"/>
        <end position="149"/>
    </location>
</feature>
<feature type="domain" description="NAC-A/B" evidence="2">
    <location>
        <begin position="38"/>
        <end position="103"/>
    </location>
</feature>
<protein>
    <recommendedName>
        <fullName>Nascent polypeptide-associated complex subunit beta-2</fullName>
        <shortName>NAC-beta-2</shortName>
    </recommendedName>
    <alternativeName>
        <fullName>BTF3 homolog BTT1</fullName>
    </alternativeName>
    <alternativeName>
        <fullName>Beta-2-NAC</fullName>
    </alternativeName>
</protein>
<proteinExistence type="evidence at protein level"/>
<comment type="function">
    <text evidence="3">Acts as a component of the nascent polypeptide-associated complex (NAC), which promotes mitochondrial protein import by enhancing productive ribosome interactions with the outer mitochondrial membrane. Also blocks the inappropriate interaction of ribosomes translating non-secretory nascent polypeptides with translocation sites in the membrane of the endoplasmic reticulum. BTT1 may act as a transcription factor that exert a negative effect on the expression of several genes that are transcribed by RNA polymerase II.</text>
</comment>
<comment type="subunit">
    <text>Part of the nascent polypeptide-associated complex (NAC), consisting of EGD2 and either EGD1 or BTT1. NAC associates with ribosomes via EGD1 or BTT1.</text>
</comment>
<comment type="subcellular location">
    <subcellularLocation>
        <location evidence="1">Cytoplasm</location>
    </subcellularLocation>
    <subcellularLocation>
        <location evidence="1">Nucleus</location>
    </subcellularLocation>
    <text evidence="1">Predominantly cytoplasmic, may also transiently localize to the nucleus.</text>
</comment>
<comment type="miscellaneous">
    <text evidence="4">Present with 1820 molecules/cell in log phase SD medium.</text>
</comment>
<comment type="similarity">
    <text evidence="5">Belongs to the NAC-beta family.</text>
</comment>
<reference key="1">
    <citation type="journal article" date="1994" name="Nucleic Acids Res.">
        <title>Yeast BTF3 protein is encoded by duplicated genes and inhibits the expression of some genes in vivo.</title>
        <authorList>
            <person name="Hu G.-Z."/>
            <person name="Ronne H."/>
        </authorList>
    </citation>
    <scope>NUCLEOTIDE SEQUENCE [GENOMIC DNA]</scope>
    <source>
        <strain>ATCC 208353 / W303-1A</strain>
    </source>
</reference>
<reference key="2">
    <citation type="journal article" date="1997" name="Nature">
        <title>The nucleotide sequence of Saccharomyces cerevisiae chromosome IV.</title>
        <authorList>
            <person name="Jacq C."/>
            <person name="Alt-Moerbe J."/>
            <person name="Andre B."/>
            <person name="Arnold W."/>
            <person name="Bahr A."/>
            <person name="Ballesta J.P.G."/>
            <person name="Bargues M."/>
            <person name="Baron L."/>
            <person name="Becker A."/>
            <person name="Biteau N."/>
            <person name="Bloecker H."/>
            <person name="Blugeon C."/>
            <person name="Boskovic J."/>
            <person name="Brandt P."/>
            <person name="Brueckner M."/>
            <person name="Buitrago M.J."/>
            <person name="Coster F."/>
            <person name="Delaveau T."/>
            <person name="del Rey F."/>
            <person name="Dujon B."/>
            <person name="Eide L.G."/>
            <person name="Garcia-Cantalejo J.M."/>
            <person name="Goffeau A."/>
            <person name="Gomez-Peris A."/>
            <person name="Granotier C."/>
            <person name="Hanemann V."/>
            <person name="Hankeln T."/>
            <person name="Hoheisel J.D."/>
            <person name="Jaeger W."/>
            <person name="Jimenez A."/>
            <person name="Jonniaux J.-L."/>
            <person name="Kraemer C."/>
            <person name="Kuester H."/>
            <person name="Laamanen P."/>
            <person name="Legros Y."/>
            <person name="Louis E.J."/>
            <person name="Moeller-Rieker S."/>
            <person name="Monnet A."/>
            <person name="Moro M."/>
            <person name="Mueller-Auer S."/>
            <person name="Nussbaumer B."/>
            <person name="Paricio N."/>
            <person name="Paulin L."/>
            <person name="Perea J."/>
            <person name="Perez-Alonso M."/>
            <person name="Perez-Ortin J.E."/>
            <person name="Pohl T.M."/>
            <person name="Prydz H."/>
            <person name="Purnelle B."/>
            <person name="Rasmussen S.W."/>
            <person name="Remacha M.A."/>
            <person name="Revuelta J.L."/>
            <person name="Rieger M."/>
            <person name="Salom D."/>
            <person name="Saluz H.P."/>
            <person name="Saiz J.E."/>
            <person name="Saren A.-M."/>
            <person name="Schaefer M."/>
            <person name="Scharfe M."/>
            <person name="Schmidt E.R."/>
            <person name="Schneider C."/>
            <person name="Scholler P."/>
            <person name="Schwarz S."/>
            <person name="Soler-Mira A."/>
            <person name="Urrestarazu L.A."/>
            <person name="Verhasselt P."/>
            <person name="Vissers S."/>
            <person name="Voet M."/>
            <person name="Volckaert G."/>
            <person name="Wagner G."/>
            <person name="Wambutt R."/>
            <person name="Wedler E."/>
            <person name="Wedler H."/>
            <person name="Woelfl S."/>
            <person name="Harris D.E."/>
            <person name="Bowman S."/>
            <person name="Brown D."/>
            <person name="Churcher C.M."/>
            <person name="Connor R."/>
            <person name="Dedman K."/>
            <person name="Gentles S."/>
            <person name="Hamlin N."/>
            <person name="Hunt S."/>
            <person name="Jones L."/>
            <person name="McDonald S."/>
            <person name="Murphy L.D."/>
            <person name="Niblett D."/>
            <person name="Odell C."/>
            <person name="Oliver K."/>
            <person name="Rajandream M.A."/>
            <person name="Richards C."/>
            <person name="Shore L."/>
            <person name="Walsh S.V."/>
            <person name="Barrell B.G."/>
            <person name="Dietrich F.S."/>
            <person name="Mulligan J.T."/>
            <person name="Allen E."/>
            <person name="Araujo R."/>
            <person name="Aviles E."/>
            <person name="Berno A."/>
            <person name="Carpenter J."/>
            <person name="Chen E."/>
            <person name="Cherry J.M."/>
            <person name="Chung E."/>
            <person name="Duncan M."/>
            <person name="Hunicke-Smith S."/>
            <person name="Hyman R.W."/>
            <person name="Komp C."/>
            <person name="Lashkari D."/>
            <person name="Lew H."/>
            <person name="Lin D."/>
            <person name="Mosedale D."/>
            <person name="Nakahara K."/>
            <person name="Namath A."/>
            <person name="Oefner P."/>
            <person name="Oh C."/>
            <person name="Petel F.X."/>
            <person name="Roberts D."/>
            <person name="Schramm S."/>
            <person name="Schroeder M."/>
            <person name="Shogren T."/>
            <person name="Shroff N."/>
            <person name="Winant A."/>
            <person name="Yelton M.A."/>
            <person name="Botstein D."/>
            <person name="Davis R.W."/>
            <person name="Johnston M."/>
            <person name="Andrews S."/>
            <person name="Brinkman R."/>
            <person name="Cooper J."/>
            <person name="Ding H."/>
            <person name="Du Z."/>
            <person name="Favello A."/>
            <person name="Fulton L."/>
            <person name="Gattung S."/>
            <person name="Greco T."/>
            <person name="Hallsworth K."/>
            <person name="Hawkins J."/>
            <person name="Hillier L.W."/>
            <person name="Jier M."/>
            <person name="Johnson D."/>
            <person name="Johnston L."/>
            <person name="Kirsten J."/>
            <person name="Kucaba T."/>
            <person name="Langston Y."/>
            <person name="Latreille P."/>
            <person name="Le T."/>
            <person name="Mardis E."/>
            <person name="Menezes S."/>
            <person name="Miller N."/>
            <person name="Nhan M."/>
            <person name="Pauley A."/>
            <person name="Peluso D."/>
            <person name="Rifkin L."/>
            <person name="Riles L."/>
            <person name="Taich A."/>
            <person name="Trevaskis E."/>
            <person name="Vignati D."/>
            <person name="Wilcox L."/>
            <person name="Wohldman P."/>
            <person name="Vaudin M."/>
            <person name="Wilson R."/>
            <person name="Waterston R."/>
            <person name="Albermann K."/>
            <person name="Hani J."/>
            <person name="Heumann K."/>
            <person name="Kleine K."/>
            <person name="Mewes H.-W."/>
            <person name="Zollner A."/>
            <person name="Zaccaria P."/>
        </authorList>
    </citation>
    <scope>NUCLEOTIDE SEQUENCE [LARGE SCALE GENOMIC DNA]</scope>
    <source>
        <strain>ATCC 204508 / S288c</strain>
    </source>
</reference>
<reference key="3">
    <citation type="journal article" date="2014" name="G3 (Bethesda)">
        <title>The reference genome sequence of Saccharomyces cerevisiae: Then and now.</title>
        <authorList>
            <person name="Engel S.R."/>
            <person name="Dietrich F.S."/>
            <person name="Fisk D.G."/>
            <person name="Binkley G."/>
            <person name="Balakrishnan R."/>
            <person name="Costanzo M.C."/>
            <person name="Dwight S.S."/>
            <person name="Hitz B.C."/>
            <person name="Karra K."/>
            <person name="Nash R.S."/>
            <person name="Weng S."/>
            <person name="Wong E.D."/>
            <person name="Lloyd P."/>
            <person name="Skrzypek M.S."/>
            <person name="Miyasato S.R."/>
            <person name="Simison M."/>
            <person name="Cherry J.M."/>
        </authorList>
    </citation>
    <scope>GENOME REANNOTATION</scope>
    <source>
        <strain>ATCC 204508 / S288c</strain>
    </source>
</reference>
<reference key="4">
    <citation type="journal article" date="2007" name="Genome Res.">
        <title>Approaching a complete repository of sequence-verified protein-encoding clones for Saccharomyces cerevisiae.</title>
        <authorList>
            <person name="Hu Y."/>
            <person name="Rolfs A."/>
            <person name="Bhullar B."/>
            <person name="Murthy T.V.S."/>
            <person name="Zhu C."/>
            <person name="Berger M.F."/>
            <person name="Camargo A.A."/>
            <person name="Kelley F."/>
            <person name="McCarron S."/>
            <person name="Jepson D."/>
            <person name="Richardson A."/>
            <person name="Raphael J."/>
            <person name="Moreira D."/>
            <person name="Taycher E."/>
            <person name="Zuo D."/>
            <person name="Mohr S."/>
            <person name="Kane M.F."/>
            <person name="Williamson J."/>
            <person name="Simpson A.J.G."/>
            <person name="Bulyk M.L."/>
            <person name="Harlow E."/>
            <person name="Marsischky G."/>
            <person name="Kolodner R.D."/>
            <person name="LaBaer J."/>
        </authorList>
    </citation>
    <scope>NUCLEOTIDE SEQUENCE [GENOMIC DNA]</scope>
    <source>
        <strain>ATCC 204508 / S288c</strain>
    </source>
</reference>
<reference key="5">
    <citation type="journal article" date="1999" name="Yeast">
        <title>Initial characterization of the nascent polypeptide-associated complex in yeast.</title>
        <authorList>
            <person name="Reimann B."/>
            <person name="Bradsher J."/>
            <person name="Franke J."/>
            <person name="Hartmann E."/>
            <person name="Wiedmann M."/>
            <person name="Prehn S."/>
            <person name="Wiedmann B."/>
        </authorList>
    </citation>
    <scope>FUNCTION</scope>
    <scope>INTERACTION WITH EGD2 AND RIBOSOMES</scope>
</reference>
<reference key="6">
    <citation type="journal article" date="2003" name="Nature">
        <title>Global analysis of protein localization in budding yeast.</title>
        <authorList>
            <person name="Huh W.-K."/>
            <person name="Falvo J.V."/>
            <person name="Gerke L.C."/>
            <person name="Carroll A.S."/>
            <person name="Howson R.W."/>
            <person name="Weissman J.S."/>
            <person name="O'Shea E.K."/>
        </authorList>
    </citation>
    <scope>SUBCELLULAR LOCATION [LARGE SCALE ANALYSIS]</scope>
</reference>
<reference key="7">
    <citation type="journal article" date="2003" name="Nature">
        <title>Global analysis of protein expression in yeast.</title>
        <authorList>
            <person name="Ghaemmaghami S."/>
            <person name="Huh W.-K."/>
            <person name="Bower K."/>
            <person name="Howson R.W."/>
            <person name="Belle A."/>
            <person name="Dephoure N."/>
            <person name="O'Shea E.K."/>
            <person name="Weissman J.S."/>
        </authorList>
    </citation>
    <scope>LEVEL OF PROTEIN EXPRESSION [LARGE SCALE ANALYSIS]</scope>
</reference>
<keyword id="KW-0963">Cytoplasm</keyword>
<keyword id="KW-0539">Nucleus</keyword>
<keyword id="KW-0653">Protein transport</keyword>
<keyword id="KW-1185">Reference proteome</keyword>
<keyword id="KW-0804">Transcription</keyword>
<keyword id="KW-0805">Transcription regulation</keyword>
<keyword id="KW-0813">Transport</keyword>
<name>NACB2_YEAST</name>
<dbReference type="EMBL" id="X78724">
    <property type="protein sequence ID" value="CAA55370.1"/>
    <property type="molecule type" value="Genomic_DNA"/>
</dbReference>
<dbReference type="EMBL" id="Z70202">
    <property type="protein sequence ID" value="CAA94091.1"/>
    <property type="molecule type" value="Genomic_DNA"/>
</dbReference>
<dbReference type="EMBL" id="Z68329">
    <property type="protein sequence ID" value="CAA92709.1"/>
    <property type="molecule type" value="Genomic_DNA"/>
</dbReference>
<dbReference type="EMBL" id="AY557726">
    <property type="protein sequence ID" value="AAS56052.1"/>
    <property type="molecule type" value="Genomic_DNA"/>
</dbReference>
<dbReference type="EMBL" id="BK006938">
    <property type="protein sequence ID" value="DAA12092.1"/>
    <property type="molecule type" value="Genomic_DNA"/>
</dbReference>
<dbReference type="PIR" id="S47574">
    <property type="entry name" value="S47574"/>
</dbReference>
<dbReference type="RefSeq" id="NP_010538.1">
    <property type="nucleotide sequence ID" value="NM_001180560.1"/>
</dbReference>
<dbReference type="SMR" id="P40314"/>
<dbReference type="BioGRID" id="32302">
    <property type="interactions" value="94"/>
</dbReference>
<dbReference type="ComplexPortal" id="CPX-1307">
    <property type="entry name" value="Nascent polypeptide-associated complex, BTT1-EGD2 variant"/>
</dbReference>
<dbReference type="DIP" id="DIP-2099N"/>
<dbReference type="FunCoup" id="P40314">
    <property type="interactions" value="1229"/>
</dbReference>
<dbReference type="IntAct" id="P40314">
    <property type="interactions" value="9"/>
</dbReference>
<dbReference type="MINT" id="P40314"/>
<dbReference type="STRING" id="4932.YDR252W"/>
<dbReference type="iPTMnet" id="P40314"/>
<dbReference type="PaxDb" id="4932-YDR252W"/>
<dbReference type="PeptideAtlas" id="P40314"/>
<dbReference type="EnsemblFungi" id="YDR252W_mRNA">
    <property type="protein sequence ID" value="YDR252W"/>
    <property type="gene ID" value="YDR252W"/>
</dbReference>
<dbReference type="GeneID" id="851839"/>
<dbReference type="KEGG" id="sce:YDR252W"/>
<dbReference type="AGR" id="SGD:S000002660"/>
<dbReference type="SGD" id="S000002660">
    <property type="gene designation" value="BTT1"/>
</dbReference>
<dbReference type="VEuPathDB" id="FungiDB:YDR252W"/>
<dbReference type="eggNOG" id="KOG2240">
    <property type="taxonomic scope" value="Eukaryota"/>
</dbReference>
<dbReference type="GeneTree" id="ENSGT00940000176500"/>
<dbReference type="HOGENOM" id="CLU_098726_2_2_1"/>
<dbReference type="InParanoid" id="P40314"/>
<dbReference type="OMA" id="CKHEHGH"/>
<dbReference type="OrthoDB" id="4039809at2759"/>
<dbReference type="BioCyc" id="YEAST:G3O-29824-MONOMER"/>
<dbReference type="BioGRID-ORCS" id="851839">
    <property type="hits" value="0 hits in 10 CRISPR screens"/>
</dbReference>
<dbReference type="PRO" id="PR:P40314"/>
<dbReference type="Proteomes" id="UP000002311">
    <property type="component" value="Chromosome IV"/>
</dbReference>
<dbReference type="RNAct" id="P40314">
    <property type="molecule type" value="protein"/>
</dbReference>
<dbReference type="GO" id="GO:0030015">
    <property type="term" value="C:CCR4-NOT core complex"/>
    <property type="evidence" value="ECO:0000353"/>
    <property type="project" value="SGD"/>
</dbReference>
<dbReference type="GO" id="GO:0005829">
    <property type="term" value="C:cytosol"/>
    <property type="evidence" value="ECO:0000318"/>
    <property type="project" value="GO_Central"/>
</dbReference>
<dbReference type="GO" id="GO:0005854">
    <property type="term" value="C:nascent polypeptide-associated complex"/>
    <property type="evidence" value="ECO:0000314"/>
    <property type="project" value="SGD"/>
</dbReference>
<dbReference type="GO" id="GO:0005634">
    <property type="term" value="C:nucleus"/>
    <property type="evidence" value="ECO:0007669"/>
    <property type="project" value="UniProtKB-SubCell"/>
</dbReference>
<dbReference type="GO" id="GO:0051082">
    <property type="term" value="F:unfolded protein binding"/>
    <property type="evidence" value="ECO:0000315"/>
    <property type="project" value="SGD"/>
</dbReference>
<dbReference type="GO" id="GO:0051083">
    <property type="term" value="P:'de novo' cotranslational protein folding"/>
    <property type="evidence" value="ECO:0000303"/>
    <property type="project" value="ComplexPortal"/>
</dbReference>
<dbReference type="GO" id="GO:0006613">
    <property type="term" value="P:cotranslational protein targeting to membrane"/>
    <property type="evidence" value="ECO:0000316"/>
    <property type="project" value="SGD"/>
</dbReference>
<dbReference type="GO" id="GO:0015031">
    <property type="term" value="P:protein transport"/>
    <property type="evidence" value="ECO:0007669"/>
    <property type="project" value="UniProtKB-KW"/>
</dbReference>
<dbReference type="CDD" id="cd22055">
    <property type="entry name" value="NAC_BTF3"/>
    <property type="match status" value="1"/>
</dbReference>
<dbReference type="FunFam" id="2.20.70.30:FF:000001">
    <property type="entry name" value="Transcription factor BTF3 homolog"/>
    <property type="match status" value="1"/>
</dbReference>
<dbReference type="Gene3D" id="2.20.70.30">
    <property type="entry name" value="Nascent polypeptide-associated complex domain"/>
    <property type="match status" value="1"/>
</dbReference>
<dbReference type="InterPro" id="IPR039370">
    <property type="entry name" value="BTF3"/>
</dbReference>
<dbReference type="InterPro" id="IPR038187">
    <property type="entry name" value="NAC_A/B_dom_sf"/>
</dbReference>
<dbReference type="InterPro" id="IPR002715">
    <property type="entry name" value="Nas_poly-pep-assoc_cplx_dom"/>
</dbReference>
<dbReference type="PANTHER" id="PTHR10351">
    <property type="entry name" value="TRANSCRIPTION FACTOR BTF3 FAMILY MEMBER"/>
    <property type="match status" value="1"/>
</dbReference>
<dbReference type="Pfam" id="PF01849">
    <property type="entry name" value="NAC"/>
    <property type="match status" value="1"/>
</dbReference>
<dbReference type="SMART" id="SM01407">
    <property type="entry name" value="NAC"/>
    <property type="match status" value="1"/>
</dbReference>
<dbReference type="PROSITE" id="PS51151">
    <property type="entry name" value="NAC_AB"/>
    <property type="match status" value="1"/>
</dbReference>
<evidence type="ECO:0000250" key="1"/>
<evidence type="ECO:0000255" key="2">
    <source>
        <dbReference type="PROSITE-ProRule" id="PRU00507"/>
    </source>
</evidence>
<evidence type="ECO:0000269" key="3">
    <source>
    </source>
</evidence>
<evidence type="ECO:0000269" key="4">
    <source>
    </source>
</evidence>
<evidence type="ECO:0000305" key="5"/>
<sequence length="149" mass="16620">MPVDQEKLAKLHKLSAANKVGGTRRKINKKGNLYNNNDKDNTKLQAELHKLHPMTIENVAEANFFKKNGKVLHFNSAVVQIAPQCNLTMIHGQPKENTLNGLYPSVASQLGSQELEYLTGLAHNLENEQTVLDQLGDRCSETKQQVMNS</sequence>
<organism>
    <name type="scientific">Saccharomyces cerevisiae (strain ATCC 204508 / S288c)</name>
    <name type="common">Baker's yeast</name>
    <dbReference type="NCBI Taxonomy" id="559292"/>
    <lineage>
        <taxon>Eukaryota</taxon>
        <taxon>Fungi</taxon>
        <taxon>Dikarya</taxon>
        <taxon>Ascomycota</taxon>
        <taxon>Saccharomycotina</taxon>
        <taxon>Saccharomycetes</taxon>
        <taxon>Saccharomycetales</taxon>
        <taxon>Saccharomycetaceae</taxon>
        <taxon>Saccharomyces</taxon>
    </lineage>
</organism>